<proteinExistence type="inferred from homology"/>
<organism>
    <name type="scientific">Vibrio vulnificus (strain CMCP6)</name>
    <dbReference type="NCBI Taxonomy" id="216895"/>
    <lineage>
        <taxon>Bacteria</taxon>
        <taxon>Pseudomonadati</taxon>
        <taxon>Pseudomonadota</taxon>
        <taxon>Gammaproteobacteria</taxon>
        <taxon>Vibrionales</taxon>
        <taxon>Vibrionaceae</taxon>
        <taxon>Vibrio</taxon>
    </lineage>
</organism>
<feature type="chain" id="PRO_0000189516" description="2-C-methyl-D-erythritol 2,4-cyclodiphosphate synthase">
    <location>
        <begin position="1"/>
        <end position="158"/>
    </location>
</feature>
<feature type="binding site" evidence="1">
    <location>
        <begin position="9"/>
        <end position="11"/>
    </location>
    <ligand>
        <name>4-CDP-2-C-methyl-D-erythritol 2-phosphate</name>
        <dbReference type="ChEBI" id="CHEBI:57919"/>
    </ligand>
</feature>
<feature type="binding site" evidence="1">
    <location>
        <position position="9"/>
    </location>
    <ligand>
        <name>a divalent metal cation</name>
        <dbReference type="ChEBI" id="CHEBI:60240"/>
    </ligand>
</feature>
<feature type="binding site" evidence="1">
    <location>
        <position position="11"/>
    </location>
    <ligand>
        <name>a divalent metal cation</name>
        <dbReference type="ChEBI" id="CHEBI:60240"/>
    </ligand>
</feature>
<feature type="binding site" evidence="1">
    <location>
        <begin position="35"/>
        <end position="36"/>
    </location>
    <ligand>
        <name>4-CDP-2-C-methyl-D-erythritol 2-phosphate</name>
        <dbReference type="ChEBI" id="CHEBI:57919"/>
    </ligand>
</feature>
<feature type="binding site" evidence="1">
    <location>
        <position position="43"/>
    </location>
    <ligand>
        <name>a divalent metal cation</name>
        <dbReference type="ChEBI" id="CHEBI:60240"/>
    </ligand>
</feature>
<feature type="binding site" evidence="1">
    <location>
        <begin position="57"/>
        <end position="59"/>
    </location>
    <ligand>
        <name>4-CDP-2-C-methyl-D-erythritol 2-phosphate</name>
        <dbReference type="ChEBI" id="CHEBI:57919"/>
    </ligand>
</feature>
<feature type="binding site" evidence="1">
    <location>
        <begin position="62"/>
        <end position="66"/>
    </location>
    <ligand>
        <name>4-CDP-2-C-methyl-D-erythritol 2-phosphate</name>
        <dbReference type="ChEBI" id="CHEBI:57919"/>
    </ligand>
</feature>
<feature type="binding site" evidence="1">
    <location>
        <begin position="101"/>
        <end position="107"/>
    </location>
    <ligand>
        <name>4-CDP-2-C-methyl-D-erythritol 2-phosphate</name>
        <dbReference type="ChEBI" id="CHEBI:57919"/>
    </ligand>
</feature>
<feature type="binding site" evidence="1">
    <location>
        <begin position="133"/>
        <end position="136"/>
    </location>
    <ligand>
        <name>4-CDP-2-C-methyl-D-erythritol 2-phosphate</name>
        <dbReference type="ChEBI" id="CHEBI:57919"/>
    </ligand>
</feature>
<feature type="binding site" evidence="1">
    <location>
        <position position="140"/>
    </location>
    <ligand>
        <name>4-CDP-2-C-methyl-D-erythritol 2-phosphate</name>
        <dbReference type="ChEBI" id="CHEBI:57919"/>
    </ligand>
</feature>
<feature type="binding site" evidence="1">
    <location>
        <position position="143"/>
    </location>
    <ligand>
        <name>4-CDP-2-C-methyl-D-erythritol 2-phosphate</name>
        <dbReference type="ChEBI" id="CHEBI:57919"/>
    </ligand>
</feature>
<feature type="site" description="Transition state stabilizer" evidence="1">
    <location>
        <position position="35"/>
    </location>
</feature>
<feature type="site" description="Transition state stabilizer" evidence="1">
    <location>
        <position position="134"/>
    </location>
</feature>
<evidence type="ECO:0000255" key="1">
    <source>
        <dbReference type="HAMAP-Rule" id="MF_00107"/>
    </source>
</evidence>
<gene>
    <name evidence="1" type="primary">ispF</name>
    <name type="ordered locus">VV1_1583</name>
</gene>
<protein>
    <recommendedName>
        <fullName evidence="1">2-C-methyl-D-erythritol 2,4-cyclodiphosphate synthase</fullName>
        <shortName evidence="1">MECDP-synthase</shortName>
        <shortName evidence="1">MECPP-synthase</shortName>
        <shortName evidence="1">MECPS</shortName>
        <ecNumber evidence="1">4.6.1.12</ecNumber>
    </recommendedName>
</protein>
<dbReference type="EC" id="4.6.1.12" evidence="1"/>
<dbReference type="EMBL" id="AE016795">
    <property type="protein sequence ID" value="AAO10006.1"/>
    <property type="molecule type" value="Genomic_DNA"/>
</dbReference>
<dbReference type="RefSeq" id="WP_011079516.1">
    <property type="nucleotide sequence ID" value="NC_004459.3"/>
</dbReference>
<dbReference type="SMR" id="Q8DC59"/>
<dbReference type="KEGG" id="vvu:VV1_1583"/>
<dbReference type="HOGENOM" id="CLU_084630_2_0_6"/>
<dbReference type="UniPathway" id="UPA00056">
    <property type="reaction ID" value="UER00095"/>
</dbReference>
<dbReference type="Proteomes" id="UP000002275">
    <property type="component" value="Chromosome 1"/>
</dbReference>
<dbReference type="GO" id="GO:0008685">
    <property type="term" value="F:2-C-methyl-D-erythritol 2,4-cyclodiphosphate synthase activity"/>
    <property type="evidence" value="ECO:0007669"/>
    <property type="project" value="UniProtKB-UniRule"/>
</dbReference>
<dbReference type="GO" id="GO:0046872">
    <property type="term" value="F:metal ion binding"/>
    <property type="evidence" value="ECO:0007669"/>
    <property type="project" value="UniProtKB-KW"/>
</dbReference>
<dbReference type="GO" id="GO:0019288">
    <property type="term" value="P:isopentenyl diphosphate biosynthetic process, methylerythritol 4-phosphate pathway"/>
    <property type="evidence" value="ECO:0007669"/>
    <property type="project" value="UniProtKB-UniRule"/>
</dbReference>
<dbReference type="GO" id="GO:0016114">
    <property type="term" value="P:terpenoid biosynthetic process"/>
    <property type="evidence" value="ECO:0007669"/>
    <property type="project" value="InterPro"/>
</dbReference>
<dbReference type="CDD" id="cd00554">
    <property type="entry name" value="MECDP_synthase"/>
    <property type="match status" value="1"/>
</dbReference>
<dbReference type="FunFam" id="3.30.1330.50:FF:000001">
    <property type="entry name" value="2-C-methyl-D-erythritol 2,4-cyclodiphosphate synthase"/>
    <property type="match status" value="1"/>
</dbReference>
<dbReference type="Gene3D" id="3.30.1330.50">
    <property type="entry name" value="2-C-methyl-D-erythritol 2,4-cyclodiphosphate synthase"/>
    <property type="match status" value="1"/>
</dbReference>
<dbReference type="HAMAP" id="MF_00107">
    <property type="entry name" value="IspF"/>
    <property type="match status" value="1"/>
</dbReference>
<dbReference type="InterPro" id="IPR003526">
    <property type="entry name" value="MECDP_synthase"/>
</dbReference>
<dbReference type="InterPro" id="IPR020555">
    <property type="entry name" value="MECDP_synthase_CS"/>
</dbReference>
<dbReference type="InterPro" id="IPR036571">
    <property type="entry name" value="MECDP_synthase_sf"/>
</dbReference>
<dbReference type="NCBIfam" id="TIGR00151">
    <property type="entry name" value="ispF"/>
    <property type="match status" value="1"/>
</dbReference>
<dbReference type="PANTHER" id="PTHR43181">
    <property type="entry name" value="2-C-METHYL-D-ERYTHRITOL 2,4-CYCLODIPHOSPHATE SYNTHASE, CHLOROPLASTIC"/>
    <property type="match status" value="1"/>
</dbReference>
<dbReference type="PANTHER" id="PTHR43181:SF1">
    <property type="entry name" value="2-C-METHYL-D-ERYTHRITOL 2,4-CYCLODIPHOSPHATE SYNTHASE, CHLOROPLASTIC"/>
    <property type="match status" value="1"/>
</dbReference>
<dbReference type="Pfam" id="PF02542">
    <property type="entry name" value="YgbB"/>
    <property type="match status" value="1"/>
</dbReference>
<dbReference type="SUPFAM" id="SSF69765">
    <property type="entry name" value="IpsF-like"/>
    <property type="match status" value="1"/>
</dbReference>
<dbReference type="PROSITE" id="PS01350">
    <property type="entry name" value="ISPF"/>
    <property type="match status" value="1"/>
</dbReference>
<comment type="function">
    <text evidence="1">Involved in the biosynthesis of isopentenyl diphosphate (IPP) and dimethylallyl diphosphate (DMAPP), two major building blocks of isoprenoid compounds. Catalyzes the conversion of 4-diphosphocytidyl-2-C-methyl-D-erythritol 2-phosphate (CDP-ME2P) to 2-C-methyl-D-erythritol 2,4-cyclodiphosphate (ME-CPP) with a corresponding release of cytidine 5-monophosphate (CMP).</text>
</comment>
<comment type="catalytic activity">
    <reaction evidence="1">
        <text>4-CDP-2-C-methyl-D-erythritol 2-phosphate = 2-C-methyl-D-erythritol 2,4-cyclic diphosphate + CMP</text>
        <dbReference type="Rhea" id="RHEA:23864"/>
        <dbReference type="ChEBI" id="CHEBI:57919"/>
        <dbReference type="ChEBI" id="CHEBI:58483"/>
        <dbReference type="ChEBI" id="CHEBI:60377"/>
        <dbReference type="EC" id="4.6.1.12"/>
    </reaction>
</comment>
<comment type="cofactor">
    <cofactor evidence="1">
        <name>a divalent metal cation</name>
        <dbReference type="ChEBI" id="CHEBI:60240"/>
    </cofactor>
    <text evidence="1">Binds 1 divalent metal cation per subunit.</text>
</comment>
<comment type="pathway">
    <text evidence="1">Isoprenoid biosynthesis; isopentenyl diphosphate biosynthesis via DXP pathway; isopentenyl diphosphate from 1-deoxy-D-xylulose 5-phosphate: step 4/6.</text>
</comment>
<comment type="subunit">
    <text evidence="1">Homotrimer.</text>
</comment>
<comment type="similarity">
    <text evidence="1">Belongs to the IspF family.</text>
</comment>
<sequence>MIRIGHGFDVHKFGGEGPVIIGGVAVPYEQGLIAHSDGDVALHALSDALLGAIAAGDIGRHFPDTDDKWKGVDSRELLKDVYRRVKEQGYKLGNADVTIIAQAPKMAPYIDAMREAIAHDLETDIRNINVKATTTERLGFTGRKEGIATEAVVLLIKQ</sequence>
<accession>Q8DC59</accession>
<reference key="1">
    <citation type="submission" date="2002-12" db="EMBL/GenBank/DDBJ databases">
        <title>Complete genome sequence of Vibrio vulnificus CMCP6.</title>
        <authorList>
            <person name="Rhee J.H."/>
            <person name="Kim S.Y."/>
            <person name="Chung S.S."/>
            <person name="Kim J.J."/>
            <person name="Moon Y.H."/>
            <person name="Jeong H."/>
            <person name="Choy H.E."/>
        </authorList>
    </citation>
    <scope>NUCLEOTIDE SEQUENCE [LARGE SCALE GENOMIC DNA]</scope>
    <source>
        <strain>CMCP6</strain>
    </source>
</reference>
<name>ISPF_VIBVU</name>
<keyword id="KW-0414">Isoprene biosynthesis</keyword>
<keyword id="KW-0456">Lyase</keyword>
<keyword id="KW-0479">Metal-binding</keyword>